<evidence type="ECO:0000250" key="1"/>
<evidence type="ECO:0000256" key="2">
    <source>
        <dbReference type="SAM" id="MobiDB-lite"/>
    </source>
</evidence>
<evidence type="ECO:0000305" key="3"/>
<name>RAD52_CANGA</name>
<organism>
    <name type="scientific">Candida glabrata (strain ATCC 2001 / BCRC 20586 / JCM 3761 / NBRC 0622 / NRRL Y-65 / CBS 138)</name>
    <name type="common">Yeast</name>
    <name type="synonym">Nakaseomyces glabratus</name>
    <dbReference type="NCBI Taxonomy" id="284593"/>
    <lineage>
        <taxon>Eukaryota</taxon>
        <taxon>Fungi</taxon>
        <taxon>Dikarya</taxon>
        <taxon>Ascomycota</taxon>
        <taxon>Saccharomycotina</taxon>
        <taxon>Saccharomycetes</taxon>
        <taxon>Saccharomycetales</taxon>
        <taxon>Saccharomycetaceae</taxon>
        <taxon>Nakaseomyces</taxon>
    </lineage>
</organism>
<comment type="function">
    <text evidence="1">Involved in DNA double-strand break (DSB) repair and recombination. Promotes the annealing of complementary single-stranded DNA and by stimulation of the RAD51 recombinase (By similarity).</text>
</comment>
<comment type="subunit">
    <text evidence="1">Part of a complex that includes RAD51, RAD52 and RAD59.</text>
</comment>
<comment type="subcellular location">
    <subcellularLocation>
        <location evidence="1">Nucleus</location>
    </subcellularLocation>
</comment>
<comment type="similarity">
    <text evidence="3">Belongs to the RAD52 family.</text>
</comment>
<keyword id="KW-0227">DNA damage</keyword>
<keyword id="KW-0233">DNA recombination</keyword>
<keyword id="KW-0234">DNA repair</keyword>
<keyword id="KW-0238">DNA-binding</keyword>
<keyword id="KW-0539">Nucleus</keyword>
<keyword id="KW-1185">Reference proteome</keyword>
<protein>
    <recommendedName>
        <fullName>DNA repair and recombination protein RAD52</fullName>
    </recommendedName>
</protein>
<feature type="chain" id="PRO_0000173885" description="DNA repair and recombination protein RAD52">
    <location>
        <begin position="1"/>
        <end position="505"/>
    </location>
</feature>
<feature type="DNA-binding region" evidence="1">
    <location>
        <begin position="130"/>
        <end position="134"/>
    </location>
</feature>
<feature type="region of interest" description="Disordered" evidence="2">
    <location>
        <begin position="178"/>
        <end position="251"/>
    </location>
</feature>
<feature type="region of interest" description="Disordered" evidence="2">
    <location>
        <begin position="368"/>
        <end position="505"/>
    </location>
</feature>
<feature type="compositionally biased region" description="Basic and acidic residues" evidence="2">
    <location>
        <begin position="229"/>
        <end position="251"/>
    </location>
</feature>
<feature type="compositionally biased region" description="Basic and acidic residues" evidence="2">
    <location>
        <begin position="378"/>
        <end position="404"/>
    </location>
</feature>
<feature type="compositionally biased region" description="Polar residues" evidence="2">
    <location>
        <begin position="406"/>
        <end position="439"/>
    </location>
</feature>
<feature type="compositionally biased region" description="Polar residues" evidence="2">
    <location>
        <begin position="448"/>
        <end position="457"/>
    </location>
</feature>
<feature type="compositionally biased region" description="Polar residues" evidence="2">
    <location>
        <begin position="470"/>
        <end position="482"/>
    </location>
</feature>
<accession>Q6FSW2</accession>
<proteinExistence type="inferred from homology"/>
<gene>
    <name type="primary">RAD52</name>
    <name type="ordered locus">CAGL0G07381g</name>
</gene>
<sequence length="505" mass="56143">MVKEEEKDKVHFNHDDIQQKLDKKLGPEYISKRIGFGSSRVAYIEGWRAINLANQIFGYNGWSTEVKNIIVDFLDERQGKFSIGCTAIVRVSLADGTYREDIGYGAVENERRKPAAFERAKKSAVTDALKRCLRGFGNALGNCLYDKEFLSRIDKVKFDPPDFDEGNLFRPSDEISEYSRSNTIDNDNPAVKRQKLNNQNSIPDTNKVKYNGSAPAPAITYNNAPKKPVQSEERYAPNGSRGKENAQNKSENEDLLDDSFMFSDDLQDDELISLMNKNSSDPDRRFNNAPKENTGDITFVTARAADSYQSTENVPENLKFDPKYVPHSMKLTIDQNTSKHIPLSVLKEKGVTATSREAIYSRFAAKGKQIPNPIDDSTDSRLAENDKSNENDDTETSHSTEIEKSAISSVNNGTNISGSTESSVTTVPSHNSTSQTTNIEAKVDKADSQVSEKQSQKGIKYAPQVPVVHPNTSAAIPLNQNKPLRREVGRPKINNVGPKKPSPTP</sequence>
<dbReference type="EMBL" id="CR380953">
    <property type="protein sequence ID" value="CAG59609.1"/>
    <property type="molecule type" value="Genomic_DNA"/>
</dbReference>
<dbReference type="RefSeq" id="XP_446682.1">
    <property type="nucleotide sequence ID" value="XM_446682.1"/>
</dbReference>
<dbReference type="SMR" id="Q6FSW2"/>
<dbReference type="FunCoup" id="Q6FSW2">
    <property type="interactions" value="327"/>
</dbReference>
<dbReference type="STRING" id="284593.Q6FSW2"/>
<dbReference type="EnsemblFungi" id="CAGL0G07381g-T">
    <property type="protein sequence ID" value="CAGL0G07381g-T-p1"/>
    <property type="gene ID" value="CAGL0G07381g"/>
</dbReference>
<dbReference type="KEGG" id="cgr:2888225"/>
<dbReference type="CGD" id="CAL0130821">
    <property type="gene designation" value="CAGL0G07381g"/>
</dbReference>
<dbReference type="VEuPathDB" id="FungiDB:CAGL0G07381g"/>
<dbReference type="eggNOG" id="KOG4141">
    <property type="taxonomic scope" value="Eukaryota"/>
</dbReference>
<dbReference type="HOGENOM" id="CLU_011431_3_2_1"/>
<dbReference type="InParanoid" id="Q6FSW2"/>
<dbReference type="Proteomes" id="UP000002428">
    <property type="component" value="Chromosome G"/>
</dbReference>
<dbReference type="GO" id="GO:0005739">
    <property type="term" value="C:mitochondrion"/>
    <property type="evidence" value="ECO:0007669"/>
    <property type="project" value="GOC"/>
</dbReference>
<dbReference type="GO" id="GO:0000228">
    <property type="term" value="C:nuclear chromosome"/>
    <property type="evidence" value="ECO:0007669"/>
    <property type="project" value="EnsemblFungi"/>
</dbReference>
<dbReference type="GO" id="GO:0000150">
    <property type="term" value="F:DNA strand exchange activity"/>
    <property type="evidence" value="ECO:0007669"/>
    <property type="project" value="EnsemblFungi"/>
</dbReference>
<dbReference type="GO" id="GO:1990814">
    <property type="term" value="F:DNA/DNA annealing activity"/>
    <property type="evidence" value="ECO:0007669"/>
    <property type="project" value="EnsemblFungi"/>
</dbReference>
<dbReference type="GO" id="GO:0006277">
    <property type="term" value="P:DNA amplification"/>
    <property type="evidence" value="ECO:0007669"/>
    <property type="project" value="EnsemblFungi"/>
</dbReference>
<dbReference type="GO" id="GO:0000730">
    <property type="term" value="P:DNA recombinase assembly"/>
    <property type="evidence" value="ECO:0007669"/>
    <property type="project" value="EnsemblFungi"/>
</dbReference>
<dbReference type="GO" id="GO:0000727">
    <property type="term" value="P:double-strand break repair via break-induced replication"/>
    <property type="evidence" value="ECO:0007669"/>
    <property type="project" value="EnsemblFungi"/>
</dbReference>
<dbReference type="GO" id="GO:0045002">
    <property type="term" value="P:double-strand break repair via single-strand annealing"/>
    <property type="evidence" value="ECO:0007669"/>
    <property type="project" value="EnsemblFungi"/>
</dbReference>
<dbReference type="GO" id="GO:0000709">
    <property type="term" value="P:meiotic joint molecule formation"/>
    <property type="evidence" value="ECO:0007669"/>
    <property type="project" value="EnsemblFungi"/>
</dbReference>
<dbReference type="GO" id="GO:0043504">
    <property type="term" value="P:mitochondrial DNA repair"/>
    <property type="evidence" value="ECO:0007669"/>
    <property type="project" value="EnsemblFungi"/>
</dbReference>
<dbReference type="GO" id="GO:0006301">
    <property type="term" value="P:postreplication repair"/>
    <property type="evidence" value="ECO:0007669"/>
    <property type="project" value="EnsemblFungi"/>
</dbReference>
<dbReference type="GO" id="GO:0000722">
    <property type="term" value="P:telomere maintenance via recombination"/>
    <property type="evidence" value="ECO:0007669"/>
    <property type="project" value="EnsemblFungi"/>
</dbReference>
<dbReference type="FunFam" id="3.30.390.80:FF:000001">
    <property type="entry name" value="DNA repair protein RAD52 homolog"/>
    <property type="match status" value="1"/>
</dbReference>
<dbReference type="Gene3D" id="3.30.390.80">
    <property type="entry name" value="DNA repair protein Rad52/59/22"/>
    <property type="match status" value="1"/>
</dbReference>
<dbReference type="InterPro" id="IPR004585">
    <property type="entry name" value="DNA_recomb/repair_Rad52"/>
</dbReference>
<dbReference type="InterPro" id="IPR041247">
    <property type="entry name" value="Rad52_fam"/>
</dbReference>
<dbReference type="InterPro" id="IPR007232">
    <property type="entry name" value="Rad52_Rad59_Rad22"/>
</dbReference>
<dbReference type="InterPro" id="IPR042525">
    <property type="entry name" value="Rad52_Rad59_Rad22_sf"/>
</dbReference>
<dbReference type="NCBIfam" id="TIGR00607">
    <property type="entry name" value="rad52"/>
    <property type="match status" value="1"/>
</dbReference>
<dbReference type="PANTHER" id="PTHR12132">
    <property type="entry name" value="DNA REPAIR AND RECOMBINATION PROTEIN RAD52, RAD59"/>
    <property type="match status" value="1"/>
</dbReference>
<dbReference type="PANTHER" id="PTHR12132:SF1">
    <property type="entry name" value="DNA REPAIR PROTEIN RAD52 HOMOLOG"/>
    <property type="match status" value="1"/>
</dbReference>
<dbReference type="Pfam" id="PF04098">
    <property type="entry name" value="Rad52_Rad22"/>
    <property type="match status" value="1"/>
</dbReference>
<dbReference type="SUPFAM" id="SSF54768">
    <property type="entry name" value="dsRNA-binding domain-like"/>
    <property type="match status" value="1"/>
</dbReference>
<reference key="1">
    <citation type="journal article" date="2004" name="Nature">
        <title>Genome evolution in yeasts.</title>
        <authorList>
            <person name="Dujon B."/>
            <person name="Sherman D."/>
            <person name="Fischer G."/>
            <person name="Durrens P."/>
            <person name="Casaregola S."/>
            <person name="Lafontaine I."/>
            <person name="de Montigny J."/>
            <person name="Marck C."/>
            <person name="Neuveglise C."/>
            <person name="Talla E."/>
            <person name="Goffard N."/>
            <person name="Frangeul L."/>
            <person name="Aigle M."/>
            <person name="Anthouard V."/>
            <person name="Babour A."/>
            <person name="Barbe V."/>
            <person name="Barnay S."/>
            <person name="Blanchin S."/>
            <person name="Beckerich J.-M."/>
            <person name="Beyne E."/>
            <person name="Bleykasten C."/>
            <person name="Boisrame A."/>
            <person name="Boyer J."/>
            <person name="Cattolico L."/>
            <person name="Confanioleri F."/>
            <person name="de Daruvar A."/>
            <person name="Despons L."/>
            <person name="Fabre E."/>
            <person name="Fairhead C."/>
            <person name="Ferry-Dumazet H."/>
            <person name="Groppi A."/>
            <person name="Hantraye F."/>
            <person name="Hennequin C."/>
            <person name="Jauniaux N."/>
            <person name="Joyet P."/>
            <person name="Kachouri R."/>
            <person name="Kerrest A."/>
            <person name="Koszul R."/>
            <person name="Lemaire M."/>
            <person name="Lesur I."/>
            <person name="Ma L."/>
            <person name="Muller H."/>
            <person name="Nicaud J.-M."/>
            <person name="Nikolski M."/>
            <person name="Oztas S."/>
            <person name="Ozier-Kalogeropoulos O."/>
            <person name="Pellenz S."/>
            <person name="Potier S."/>
            <person name="Richard G.-F."/>
            <person name="Straub M.-L."/>
            <person name="Suleau A."/>
            <person name="Swennen D."/>
            <person name="Tekaia F."/>
            <person name="Wesolowski-Louvel M."/>
            <person name="Westhof E."/>
            <person name="Wirth B."/>
            <person name="Zeniou-Meyer M."/>
            <person name="Zivanovic Y."/>
            <person name="Bolotin-Fukuhara M."/>
            <person name="Thierry A."/>
            <person name="Bouchier C."/>
            <person name="Caudron B."/>
            <person name="Scarpelli C."/>
            <person name="Gaillardin C."/>
            <person name="Weissenbach J."/>
            <person name="Wincker P."/>
            <person name="Souciet J.-L."/>
        </authorList>
    </citation>
    <scope>NUCLEOTIDE SEQUENCE [LARGE SCALE GENOMIC DNA]</scope>
    <source>
        <strain>ATCC 2001 / BCRC 20586 / JCM 3761 / NBRC 0622 / NRRL Y-65 / CBS 138</strain>
    </source>
</reference>